<organism>
    <name type="scientific">Saccharomyces cerevisiae (strain ATCC 204508 / S288c)</name>
    <name type="common">Baker's yeast</name>
    <dbReference type="NCBI Taxonomy" id="559292"/>
    <lineage>
        <taxon>Eukaryota</taxon>
        <taxon>Fungi</taxon>
        <taxon>Dikarya</taxon>
        <taxon>Ascomycota</taxon>
        <taxon>Saccharomycotina</taxon>
        <taxon>Saccharomycetes</taxon>
        <taxon>Saccharomycetales</taxon>
        <taxon>Saccharomycetaceae</taxon>
        <taxon>Saccharomyces</taxon>
    </lineage>
</organism>
<accession>P40889</accession>
<accession>D6VVX3</accession>
<accession>P40887</accession>
<accession>Q05371</accession>
<accession>Q9UQW2</accession>
<reference key="1">
    <citation type="journal article" date="1994" name="Yeast">
        <title>Sequence analysis of a 40.2 kb DNA fragment located near the left telomere of yeast chromosome X.</title>
        <authorList>
            <person name="Vandenbol M."/>
            <person name="Durand P."/>
            <person name="Bolle P.-A."/>
            <person name="Dion C."/>
            <person name="Portetelle D."/>
            <person name="Hilger F."/>
        </authorList>
    </citation>
    <scope>PRELIMINARY NUCLEOTIDE SEQUENCE</scope>
    <source>
        <strain>ATCC 204508 / S288c</strain>
    </source>
</reference>
<reference key="2">
    <citation type="journal article" date="1996" name="EMBO J.">
        <title>Complete nucleotide sequence of Saccharomyces cerevisiae chromosome X.</title>
        <authorList>
            <person name="Galibert F."/>
            <person name="Alexandraki D."/>
            <person name="Baur A."/>
            <person name="Boles E."/>
            <person name="Chalwatzis N."/>
            <person name="Chuat J.-C."/>
            <person name="Coster F."/>
            <person name="Cziepluch C."/>
            <person name="de Haan M."/>
            <person name="Domdey H."/>
            <person name="Durand P."/>
            <person name="Entian K.-D."/>
            <person name="Gatius M."/>
            <person name="Goffeau A."/>
            <person name="Grivell L.A."/>
            <person name="Hennemann A."/>
            <person name="Herbert C.J."/>
            <person name="Heumann K."/>
            <person name="Hilger F."/>
            <person name="Hollenberg C.P."/>
            <person name="Huang M.-E."/>
            <person name="Jacq C."/>
            <person name="Jauniaux J.-C."/>
            <person name="Katsoulou C."/>
            <person name="Kirchrath L."/>
            <person name="Kleine K."/>
            <person name="Kordes E."/>
            <person name="Koetter P."/>
            <person name="Liebl S."/>
            <person name="Louis E.J."/>
            <person name="Manus V."/>
            <person name="Mewes H.-W."/>
            <person name="Miosga T."/>
            <person name="Obermaier B."/>
            <person name="Perea J."/>
            <person name="Pohl T.M."/>
            <person name="Portetelle D."/>
            <person name="Pujol A."/>
            <person name="Purnelle B."/>
            <person name="Ramezani Rad M."/>
            <person name="Rasmussen S.W."/>
            <person name="Rose M."/>
            <person name="Rossau R."/>
            <person name="Schaaff-Gerstenschlaeger I."/>
            <person name="Smits P.H.M."/>
            <person name="Scarcez T."/>
            <person name="Soriano N."/>
            <person name="To Van D."/>
            <person name="Tzermia M."/>
            <person name="Van Broekhoven A."/>
            <person name="Vandenbol M."/>
            <person name="Wedler H."/>
            <person name="von Wettstein D."/>
            <person name="Wambutt R."/>
            <person name="Zagulski M."/>
            <person name="Zollner A."/>
            <person name="Karpfinger-Hartl L."/>
        </authorList>
    </citation>
    <scope>NUCLEOTIDE SEQUENCE [LARGE SCALE GENOMIC DNA]</scope>
    <source>
        <strain>ATCC 204508 / S288c</strain>
    </source>
</reference>
<reference key="3">
    <citation type="journal article" date="2014" name="G3 (Bethesda)">
        <title>The reference genome sequence of Saccharomyces cerevisiae: Then and now.</title>
        <authorList>
            <person name="Engel S.R."/>
            <person name="Dietrich F.S."/>
            <person name="Fisk D.G."/>
            <person name="Binkley G."/>
            <person name="Balakrishnan R."/>
            <person name="Costanzo M.C."/>
            <person name="Dwight S.S."/>
            <person name="Hitz B.C."/>
            <person name="Karra K."/>
            <person name="Nash R.S."/>
            <person name="Weng S."/>
            <person name="Wong E.D."/>
            <person name="Lloyd P."/>
            <person name="Skrzypek M.S."/>
            <person name="Miyasato S.R."/>
            <person name="Simison M."/>
            <person name="Cherry J.M."/>
        </authorList>
    </citation>
    <scope>GENOME REANNOTATION</scope>
    <source>
        <strain>ATCC 204508 / S288c</strain>
    </source>
</reference>
<reference key="4">
    <citation type="journal article" date="1998" name="J. Biol. Chem.">
        <title>Y'-Help1, a DNA helicase encoded by the yeast subtelomeric Y' element, is induced in survivors defective for telomerase.</title>
        <authorList>
            <person name="Yamada M."/>
            <person name="Hayatsu N."/>
            <person name="Matsuura A."/>
            <person name="Ishikawa F."/>
        </authorList>
    </citation>
    <scope>FUNCTION</scope>
    <scope>INDUCTION</scope>
</reference>
<protein>
    <recommendedName>
        <fullName>Y' element ATP-dependent helicase YJL225C</fullName>
        <ecNumber evidence="5">5.6.2.-</ecNumber>
    </recommendedName>
</protein>
<sequence length="1758" mass="197565">MKVSDRRKFEKANFDEFESALNNKNDLVHCPSITLFESIPTEVRSFYEDEKSGLIKVVKFRTGAMDRKRSFEKVVISVMVGKNVKKFLTFVEDEPDFQGGPIPSKYLIPKKINLMVYTLFQVHTLKFNRKDYDTLSLFYLNRGYYNELSFRVLERCHEIASARPNDSSTMRTFTDFVSGAPIVRSLQKSTIRKYGYNLAPYMFLLLHVDELSIFSAYQASLPGEKKVDTERLKRDLCPRKPIEIKYFSQICNDMMNKKDRLGDILHIILRACALNFGAGPRGGAGDEEDRSITNEEPIIPSVDEHGLKVCKLRSPNTPRRLRKTLDAVKALLVSSCACTARDLDIFDDNNGVAMWKWIKILYHEVAQETTLKDSYRITLVPSSDGISLLAFAGPQRNVYVDDTTRRIQLYTDYNKNGSSEPRLKTLDGLTSDYVFYFVTVLRQMQICALGNSYDAFNHDPWMDVVGFEDPNQVTNRDISRIVLYSYMFLNTAKGCLVEYATFRQYMRELPKNAPQKLNFREMRQGLIALGRHCVGSRFETDLYESATSELMANHSVQTGRNIYGVDSFSLTSVSGTTATLLQERASERWIQWLGLESDYHCSFSSTRNAEDVVAGEAASSNHHQKISRVTRKRPREPKSTNDILVAGQKLFGSSFEFRDLHQLRLCYEIYMADTPSVAVQAPPGYGKTELFHLPLIALASKGDVEYVSFLFVPYTVLLANCMIRLGRRGCLNVAPVRNFIEEGYDGVTDLYVGIYDDLASTNFTDRIAAWENIVECTFRTNNVKLGYLIVDEFHNFETEVYRQSQFGGITNLDFDAFEKAIFLSGTAPEAVADAALQRIGLTGLAKKSMDINELKRSEDLSRGLSSYPTRMFNLIKEKSEVPLGHVHKIRKKVESQPEEALKLLLALFESEPESKAIVVASTTNEVEELACSWRKYFRVVWIHGKLGAAEKVSRTKEFVTDGSMQVLIGTKLVTEGIDIKQLMMVIMLDNRLNIIELIQGVGRLRDGGLCYLLSRKNSWAARNRKGELPPIKEGCITEQVREFYGLESKKGKKGQHVGCCGSRTDLSADTVELIERMDRLAEKQATASMSIVALPSSFQESNSSDRYRKYCSSDEDSNTCIHGSANASTNASTNAITTASTNVRTNATTNASTNATTNASTNASTNATTNASTNATTNSSTNATTTASTNVRTSATTTASINVRTSATTTESTNSSTNATTTESTNSSTNATTTESTNSNTSATTTASINVRTSATTTESTNSSTSATTTASINVRTSATTTKSINSSTNATTTESTNSNTNATTTESTNSSTNATTTESTNSSTNATTTESTNSNTSAATTESTNSNTSATTTESTNASAKEDANKDGNAEDNRFHPVTDINKESYKRKGSQMVLLERKKLKAQFPNTSENMNVLQFLGFRSDEIKHLFLYGIDIYFCPEGVFTQYGLCKGCQKMFELCVCWAGQKVSYRRIAWEALAVERMLRNDEEYKEYLEDIEPYHGDPVGYLKYFSVKRREIYSQIQRNYAWYLAITRRRETISVLDSTRGKQGSQVFRMSGRQIKELYFKVWSNLRESKTEVLQYFLNWDEKKCQEEWEAKDDTVVVEALEKGGVFQRLRSMTSAGLQGPQYVKLQFSRHHRQLRSRYELSLGMHLRDQIALGVTPSKVPHWTAFLSMLIGLFYNKTFRQKLEYLLEQISEVWLLPHWLDLANVEVLAADDTRVPLYMLMVAVHKELDSDDVPDGRFDILLCRDSSREVGE</sequence>
<feature type="chain" id="PRO_0000102208" description="Y' element ATP-dependent helicase YJL225C">
    <location>
        <begin position="1"/>
        <end position="1758"/>
    </location>
</feature>
<feature type="domain" description="Helicase ATP-binding" evidence="1">
    <location>
        <begin position="668"/>
        <end position="845"/>
    </location>
</feature>
<feature type="domain" description="Helicase C-terminal" evidence="2">
    <location>
        <begin position="900"/>
        <end position="1051"/>
    </location>
</feature>
<feature type="region of interest" description="Disordered" evidence="3">
    <location>
        <begin position="1142"/>
        <end position="1384"/>
    </location>
</feature>
<feature type="compositionally biased region" description="Low complexity" evidence="3">
    <location>
        <begin position="1142"/>
        <end position="1360"/>
    </location>
</feature>
<feature type="compositionally biased region" description="Basic and acidic residues" evidence="3">
    <location>
        <begin position="1361"/>
        <end position="1384"/>
    </location>
</feature>
<feature type="binding site" evidence="1">
    <location>
        <begin position="681"/>
        <end position="688"/>
    </location>
    <ligand>
        <name>ATP</name>
        <dbReference type="ChEBI" id="CHEBI:30616"/>
    </ligand>
</feature>
<dbReference type="EC" id="5.6.2.-" evidence="5"/>
<dbReference type="EMBL" id="Z48148">
    <property type="protein sequence ID" value="CAA88141.1"/>
    <property type="status" value="ALT_SEQ"/>
    <property type="molecule type" value="Genomic_DNA"/>
</dbReference>
<dbReference type="EMBL" id="Z48148">
    <property type="protein sequence ID" value="CAA88142.1"/>
    <property type="status" value="ALT_SEQ"/>
    <property type="molecule type" value="Genomic_DNA"/>
</dbReference>
<dbReference type="EMBL" id="Z34098">
    <property type="protein sequence ID" value="CAA83986.1"/>
    <property type="status" value="ALT_SEQ"/>
    <property type="molecule type" value="Genomic_DNA"/>
</dbReference>
<dbReference type="EMBL" id="Z34098">
    <property type="protein sequence ID" value="CAA83985.1"/>
    <property type="status" value="ALT_SEQ"/>
    <property type="molecule type" value="Genomic_DNA"/>
</dbReference>
<dbReference type="EMBL" id="Z49498">
    <property type="protein sequence ID" value="CAA89520.1"/>
    <property type="molecule type" value="Genomic_DNA"/>
</dbReference>
<dbReference type="EMBL" id="Z49500">
    <property type="protein sequence ID" value="CAA89522.1"/>
    <property type="molecule type" value="Genomic_DNA"/>
</dbReference>
<dbReference type="EMBL" id="BK006943">
    <property type="protein sequence ID" value="DAA08589.1"/>
    <property type="molecule type" value="Genomic_DNA"/>
</dbReference>
<dbReference type="PIR" id="S57015">
    <property type="entry name" value="S57015"/>
</dbReference>
<dbReference type="RefSeq" id="NP_012311.1">
    <property type="nucleotide sequence ID" value="NM_001181657.1"/>
</dbReference>
<dbReference type="BioGRID" id="33558">
    <property type="interactions" value="4"/>
</dbReference>
<dbReference type="DIP" id="DIP-4705N"/>
<dbReference type="FunCoup" id="P40889">
    <property type="interactions" value="50"/>
</dbReference>
<dbReference type="STRING" id="4932.YJL225C"/>
<dbReference type="PaxDb" id="4932-YJL225C"/>
<dbReference type="PeptideAtlas" id="P40889"/>
<dbReference type="EnsemblFungi" id="YJL225C_mRNA">
    <property type="protein sequence ID" value="YJL225C"/>
    <property type="gene ID" value="YJL225C"/>
</dbReference>
<dbReference type="GeneID" id="853231"/>
<dbReference type="KEGG" id="sce:YJL225C"/>
<dbReference type="AGR" id="SGD:S000003760"/>
<dbReference type="SGD" id="S000003760">
    <property type="gene designation" value="YJL225C"/>
</dbReference>
<dbReference type="VEuPathDB" id="FungiDB:YJL225C"/>
<dbReference type="eggNOG" id="ENOG502QWCT">
    <property type="taxonomic scope" value="Eukaryota"/>
</dbReference>
<dbReference type="GeneTree" id="ENSGT00940000153173"/>
<dbReference type="HOGENOM" id="CLU_003044_2_0_1"/>
<dbReference type="InParanoid" id="P40889"/>
<dbReference type="BioCyc" id="YEAST:G3O-31646-MONOMER"/>
<dbReference type="Reactome" id="R-SCE-5689880">
    <property type="pathway name" value="Ub-specific processing proteases"/>
</dbReference>
<dbReference type="PRO" id="PR:P40889"/>
<dbReference type="Proteomes" id="UP000002311">
    <property type="component" value="Chromosome X"/>
</dbReference>
<dbReference type="RNAct" id="P40889">
    <property type="molecule type" value="protein"/>
</dbReference>
<dbReference type="GO" id="GO:0005737">
    <property type="term" value="C:cytoplasm"/>
    <property type="evidence" value="ECO:0000318"/>
    <property type="project" value="GO_Central"/>
</dbReference>
<dbReference type="GO" id="GO:0005524">
    <property type="term" value="F:ATP binding"/>
    <property type="evidence" value="ECO:0007669"/>
    <property type="project" value="UniProtKB-KW"/>
</dbReference>
<dbReference type="GO" id="GO:0016887">
    <property type="term" value="F:ATP hydrolysis activity"/>
    <property type="evidence" value="ECO:0007669"/>
    <property type="project" value="RHEA"/>
</dbReference>
<dbReference type="GO" id="GO:0004386">
    <property type="term" value="F:helicase activity"/>
    <property type="evidence" value="ECO:0000250"/>
    <property type="project" value="SGD"/>
</dbReference>
<dbReference type="GO" id="GO:0003676">
    <property type="term" value="F:nucleic acid binding"/>
    <property type="evidence" value="ECO:0007669"/>
    <property type="project" value="InterPro"/>
</dbReference>
<dbReference type="GO" id="GO:0000722">
    <property type="term" value="P:telomere maintenance via recombination"/>
    <property type="evidence" value="ECO:0007669"/>
    <property type="project" value="UniProtKB-ARBA"/>
</dbReference>
<dbReference type="CDD" id="cd18785">
    <property type="entry name" value="SF2_C"/>
    <property type="match status" value="1"/>
</dbReference>
<dbReference type="FunFam" id="3.40.50.300:FF:001914">
    <property type="entry name" value="YML133C-like protein"/>
    <property type="match status" value="1"/>
</dbReference>
<dbReference type="FunFam" id="3.40.50.300:FF:002410">
    <property type="entry name" value="YML133C-like protein"/>
    <property type="match status" value="1"/>
</dbReference>
<dbReference type="Gene3D" id="3.40.50.300">
    <property type="entry name" value="P-loop containing nucleotide triphosphate hydrolases"/>
    <property type="match status" value="1"/>
</dbReference>
<dbReference type="InterPro" id="IPR011545">
    <property type="entry name" value="DEAD/DEAH_box_helicase_dom"/>
</dbReference>
<dbReference type="InterPro" id="IPR014001">
    <property type="entry name" value="Helicase_ATP-bd"/>
</dbReference>
<dbReference type="InterPro" id="IPR001650">
    <property type="entry name" value="Helicase_C-like"/>
</dbReference>
<dbReference type="InterPro" id="IPR027417">
    <property type="entry name" value="P-loop_NTPase"/>
</dbReference>
<dbReference type="InterPro" id="IPR021646">
    <property type="entry name" value="Sir1_ORC-binding"/>
</dbReference>
<dbReference type="InterPro" id="IPR050978">
    <property type="entry name" value="Y'_ATP-dependent_helicase"/>
</dbReference>
<dbReference type="PANTHER" id="PTHR31583">
    <property type="match status" value="1"/>
</dbReference>
<dbReference type="PANTHER" id="PTHR31583:SF2">
    <property type="match status" value="1"/>
</dbReference>
<dbReference type="Pfam" id="PF00270">
    <property type="entry name" value="DEAD"/>
    <property type="match status" value="1"/>
</dbReference>
<dbReference type="Pfam" id="PF00271">
    <property type="entry name" value="Helicase_C"/>
    <property type="match status" value="1"/>
</dbReference>
<dbReference type="Pfam" id="PF11603">
    <property type="entry name" value="Sir1"/>
    <property type="match status" value="1"/>
</dbReference>
<dbReference type="SMART" id="SM00487">
    <property type="entry name" value="DEXDc"/>
    <property type="match status" value="1"/>
</dbReference>
<dbReference type="SMART" id="SM00490">
    <property type="entry name" value="HELICc"/>
    <property type="match status" value="1"/>
</dbReference>
<dbReference type="SUPFAM" id="SSF52540">
    <property type="entry name" value="P-loop containing nucleoside triphosphate hydrolases"/>
    <property type="match status" value="1"/>
</dbReference>
<dbReference type="PROSITE" id="PS51192">
    <property type="entry name" value="HELICASE_ATP_BIND_1"/>
    <property type="match status" value="1"/>
</dbReference>
<dbReference type="PROSITE" id="PS51194">
    <property type="entry name" value="HELICASE_CTER"/>
    <property type="match status" value="1"/>
</dbReference>
<gene>
    <name type="ordered locus">YJL225C</name>
    <name type="ORF">HRF393/HRD1054</name>
    <name type="ORF">HRF393/HRD732</name>
    <name type="ORF">J0202</name>
</gene>
<proteinExistence type="evidence at transcript level"/>
<comment type="function">
    <text evidence="5">Catalyzes DNA unwinding and is involved in telomerase-independent telomere maintenance.</text>
</comment>
<comment type="induction">
    <text evidence="5">Induced in absence of telomerase TLC1.</text>
</comment>
<comment type="similarity">
    <text evidence="4">Belongs to the helicase family. Yeast subtelomeric Y' repeat subfamily.</text>
</comment>
<name>YJW5_YEAST</name>
<keyword id="KW-0067">ATP-binding</keyword>
<keyword id="KW-0347">Helicase</keyword>
<keyword id="KW-0378">Hydrolase</keyword>
<keyword id="KW-0413">Isomerase</keyword>
<keyword id="KW-0547">Nucleotide-binding</keyword>
<keyword id="KW-1185">Reference proteome</keyword>
<keyword id="KW-0677">Repeat</keyword>
<evidence type="ECO:0000255" key="1">
    <source>
        <dbReference type="PROSITE-ProRule" id="PRU00541"/>
    </source>
</evidence>
<evidence type="ECO:0000255" key="2">
    <source>
        <dbReference type="PROSITE-ProRule" id="PRU00542"/>
    </source>
</evidence>
<evidence type="ECO:0000256" key="3">
    <source>
        <dbReference type="SAM" id="MobiDB-lite"/>
    </source>
</evidence>
<evidence type="ECO:0000305" key="4"/>
<evidence type="ECO:0000305" key="5">
    <source>
    </source>
</evidence>